<comment type="function">
    <text>Metallothioneins have a high content of cysteine residues that bind various heavy metals; these proteins are transcriptionally regulated by both heavy metals and glucocorticoids.</text>
</comment>
<comment type="domain">
    <text>Class I metallothioneins contain 2 metal-binding domains: four divalent ions are chelated within cluster A of the alpha domain and are coordinated via cysteinyl thiolate bridges to 11 cysteine ligands. Cluster B, the corresponding region within the beta domain, can ligate three divalent ions to 9 cysteines.</text>
</comment>
<comment type="similarity">
    <text evidence="3">Belongs to the metallothionein superfamily. Type 1 family.</text>
</comment>
<reference key="1">
    <citation type="journal article" date="1977" name="J. Biol. Chem.">
        <title>Mouse liver metallothioneins. Complete amino acid sequence of metallothionein-I.</title>
        <authorList>
            <person name="Huang I.-Y."/>
            <person name="Yoshida A."/>
            <person name="Tsunoo H."/>
            <person name="Nakajima H."/>
        </authorList>
    </citation>
    <scope>PROTEIN SEQUENCE</scope>
    <scope>ACETYLATION AT MET-1</scope>
    <source>
        <tissue>Liver</tissue>
    </source>
</reference>
<reference key="2">
    <citation type="journal article" date="1981" name="Nature">
        <title>Structure of mouse metallothionein-I gene and its mRNA.</title>
        <authorList>
            <person name="Glanville N."/>
            <person name="Durnam D.M."/>
            <person name="Palmiter R.D."/>
        </authorList>
    </citation>
    <scope>NUCLEOTIDE SEQUENCE [GENOMIC DNA]</scope>
</reference>
<reference key="3">
    <citation type="journal article" date="1980" name="Proc. Natl. Acad. Sci. U.S.A.">
        <title>Isolation and characterization of the mouse metallothionein-I gene.</title>
        <authorList>
            <person name="Durnam D.M."/>
            <person name="Perrin F."/>
            <person name="Gannon F."/>
            <person name="Palmiter R.D."/>
        </authorList>
    </citation>
    <scope>NUCLEOTIDE SEQUENCE [GENOMIC DNA]</scope>
    <source>
        <tissue>Liver</tissue>
    </source>
</reference>
<reference key="4">
    <citation type="journal article" date="1981" name="Biochem. Biophys. Res. Commun.">
        <title>Cloning and sequencing of cDNA for mouse liver metallothionein-I.</title>
        <authorList>
            <person name="Mbikay M."/>
            <person name="Maiti I.B."/>
            <person name="Thirion J.-P."/>
        </authorList>
    </citation>
    <scope>NUCLEOTIDE SEQUENCE [GENOMIC DNA]</scope>
</reference>
<reference key="5">
    <citation type="journal article" date="1993" name="Immunology">
        <title>Production of a bifunctional hybrid molecule B72.3/metallothionein-1 by protein engineering.</title>
        <authorList>
            <person name="Xiang J."/>
            <person name="Koropatnick J."/>
            <person name="Qi Y."/>
            <person name="Luo X."/>
            <person name="Moyana T."/>
            <person name="Li K."/>
            <person name="Chen Y."/>
        </authorList>
    </citation>
    <scope>NUCLEOTIDE SEQUENCE</scope>
</reference>
<reference key="6">
    <citation type="journal article" date="2005" name="Science">
        <title>The transcriptional landscape of the mammalian genome.</title>
        <authorList>
            <person name="Carninci P."/>
            <person name="Kasukawa T."/>
            <person name="Katayama S."/>
            <person name="Gough J."/>
            <person name="Frith M.C."/>
            <person name="Maeda N."/>
            <person name="Oyama R."/>
            <person name="Ravasi T."/>
            <person name="Lenhard B."/>
            <person name="Wells C."/>
            <person name="Kodzius R."/>
            <person name="Shimokawa K."/>
            <person name="Bajic V.B."/>
            <person name="Brenner S.E."/>
            <person name="Batalov S."/>
            <person name="Forrest A.R."/>
            <person name="Zavolan M."/>
            <person name="Davis M.J."/>
            <person name="Wilming L.G."/>
            <person name="Aidinis V."/>
            <person name="Allen J.E."/>
            <person name="Ambesi-Impiombato A."/>
            <person name="Apweiler R."/>
            <person name="Aturaliya R.N."/>
            <person name="Bailey T.L."/>
            <person name="Bansal M."/>
            <person name="Baxter L."/>
            <person name="Beisel K.W."/>
            <person name="Bersano T."/>
            <person name="Bono H."/>
            <person name="Chalk A.M."/>
            <person name="Chiu K.P."/>
            <person name="Choudhary V."/>
            <person name="Christoffels A."/>
            <person name="Clutterbuck D.R."/>
            <person name="Crowe M.L."/>
            <person name="Dalla E."/>
            <person name="Dalrymple B.P."/>
            <person name="de Bono B."/>
            <person name="Della Gatta G."/>
            <person name="di Bernardo D."/>
            <person name="Down T."/>
            <person name="Engstrom P."/>
            <person name="Fagiolini M."/>
            <person name="Faulkner G."/>
            <person name="Fletcher C.F."/>
            <person name="Fukushima T."/>
            <person name="Furuno M."/>
            <person name="Futaki S."/>
            <person name="Gariboldi M."/>
            <person name="Georgii-Hemming P."/>
            <person name="Gingeras T.R."/>
            <person name="Gojobori T."/>
            <person name="Green R.E."/>
            <person name="Gustincich S."/>
            <person name="Harbers M."/>
            <person name="Hayashi Y."/>
            <person name="Hensch T.K."/>
            <person name="Hirokawa N."/>
            <person name="Hill D."/>
            <person name="Huminiecki L."/>
            <person name="Iacono M."/>
            <person name="Ikeo K."/>
            <person name="Iwama A."/>
            <person name="Ishikawa T."/>
            <person name="Jakt M."/>
            <person name="Kanapin A."/>
            <person name="Katoh M."/>
            <person name="Kawasawa Y."/>
            <person name="Kelso J."/>
            <person name="Kitamura H."/>
            <person name="Kitano H."/>
            <person name="Kollias G."/>
            <person name="Krishnan S.P."/>
            <person name="Kruger A."/>
            <person name="Kummerfeld S.K."/>
            <person name="Kurochkin I.V."/>
            <person name="Lareau L.F."/>
            <person name="Lazarevic D."/>
            <person name="Lipovich L."/>
            <person name="Liu J."/>
            <person name="Liuni S."/>
            <person name="McWilliam S."/>
            <person name="Madan Babu M."/>
            <person name="Madera M."/>
            <person name="Marchionni L."/>
            <person name="Matsuda H."/>
            <person name="Matsuzawa S."/>
            <person name="Miki H."/>
            <person name="Mignone F."/>
            <person name="Miyake S."/>
            <person name="Morris K."/>
            <person name="Mottagui-Tabar S."/>
            <person name="Mulder N."/>
            <person name="Nakano N."/>
            <person name="Nakauchi H."/>
            <person name="Ng P."/>
            <person name="Nilsson R."/>
            <person name="Nishiguchi S."/>
            <person name="Nishikawa S."/>
            <person name="Nori F."/>
            <person name="Ohara O."/>
            <person name="Okazaki Y."/>
            <person name="Orlando V."/>
            <person name="Pang K.C."/>
            <person name="Pavan W.J."/>
            <person name="Pavesi G."/>
            <person name="Pesole G."/>
            <person name="Petrovsky N."/>
            <person name="Piazza S."/>
            <person name="Reed J."/>
            <person name="Reid J.F."/>
            <person name="Ring B.Z."/>
            <person name="Ringwald M."/>
            <person name="Rost B."/>
            <person name="Ruan Y."/>
            <person name="Salzberg S.L."/>
            <person name="Sandelin A."/>
            <person name="Schneider C."/>
            <person name="Schoenbach C."/>
            <person name="Sekiguchi K."/>
            <person name="Semple C.A."/>
            <person name="Seno S."/>
            <person name="Sessa L."/>
            <person name="Sheng Y."/>
            <person name="Shibata Y."/>
            <person name="Shimada H."/>
            <person name="Shimada K."/>
            <person name="Silva D."/>
            <person name="Sinclair B."/>
            <person name="Sperling S."/>
            <person name="Stupka E."/>
            <person name="Sugiura K."/>
            <person name="Sultana R."/>
            <person name="Takenaka Y."/>
            <person name="Taki K."/>
            <person name="Tammoja K."/>
            <person name="Tan S.L."/>
            <person name="Tang S."/>
            <person name="Taylor M.S."/>
            <person name="Tegner J."/>
            <person name="Teichmann S.A."/>
            <person name="Ueda H.R."/>
            <person name="van Nimwegen E."/>
            <person name="Verardo R."/>
            <person name="Wei C.L."/>
            <person name="Yagi K."/>
            <person name="Yamanishi H."/>
            <person name="Zabarovsky E."/>
            <person name="Zhu S."/>
            <person name="Zimmer A."/>
            <person name="Hide W."/>
            <person name="Bult C."/>
            <person name="Grimmond S.M."/>
            <person name="Teasdale R.D."/>
            <person name="Liu E.T."/>
            <person name="Brusic V."/>
            <person name="Quackenbush J."/>
            <person name="Wahlestedt C."/>
            <person name="Mattick J.S."/>
            <person name="Hume D.A."/>
            <person name="Kai C."/>
            <person name="Sasaki D."/>
            <person name="Tomaru Y."/>
            <person name="Fukuda S."/>
            <person name="Kanamori-Katayama M."/>
            <person name="Suzuki M."/>
            <person name="Aoki J."/>
            <person name="Arakawa T."/>
            <person name="Iida J."/>
            <person name="Imamura K."/>
            <person name="Itoh M."/>
            <person name="Kato T."/>
            <person name="Kawaji H."/>
            <person name="Kawagashira N."/>
            <person name="Kawashima T."/>
            <person name="Kojima M."/>
            <person name="Kondo S."/>
            <person name="Konno H."/>
            <person name="Nakano K."/>
            <person name="Ninomiya N."/>
            <person name="Nishio T."/>
            <person name="Okada M."/>
            <person name="Plessy C."/>
            <person name="Shibata K."/>
            <person name="Shiraki T."/>
            <person name="Suzuki S."/>
            <person name="Tagami M."/>
            <person name="Waki K."/>
            <person name="Watahiki A."/>
            <person name="Okamura-Oho Y."/>
            <person name="Suzuki H."/>
            <person name="Kawai J."/>
            <person name="Hayashizaki Y."/>
        </authorList>
    </citation>
    <scope>NUCLEOTIDE SEQUENCE [LARGE SCALE MRNA]</scope>
    <source>
        <strain>C57BL/6J</strain>
        <tissue>Kidney</tissue>
    </source>
</reference>
<reference key="7">
    <citation type="journal article" date="2004" name="Genome Res.">
        <title>The status, quality, and expansion of the NIH full-length cDNA project: the Mammalian Gene Collection (MGC).</title>
        <authorList>
            <consortium name="The MGC Project Team"/>
        </authorList>
    </citation>
    <scope>NUCLEOTIDE SEQUENCE [LARGE SCALE MRNA]</scope>
    <source>
        <strain>FVB/N</strain>
        <tissue>Colon</tissue>
    </source>
</reference>
<reference key="8">
    <citation type="journal article" date="2010" name="Cell">
        <title>A tissue-specific atlas of mouse protein phosphorylation and expression.</title>
        <authorList>
            <person name="Huttlin E.L."/>
            <person name="Jedrychowski M.P."/>
            <person name="Elias J.E."/>
            <person name="Goswami T."/>
            <person name="Rad R."/>
            <person name="Beausoleil S.A."/>
            <person name="Villen J."/>
            <person name="Haas W."/>
            <person name="Sowa M.E."/>
            <person name="Gygi S.P."/>
        </authorList>
    </citation>
    <scope>IDENTIFICATION BY MASS SPECTROMETRY [LARGE SCALE ANALYSIS]</scope>
    <source>
        <tissue>Brain</tissue>
        <tissue>Testis</tissue>
    </source>
</reference>
<reference evidence="4 5" key="9">
    <citation type="journal article" date="1999" name="Protein Sci.">
        <title>Three-dimensional solution structure of mouse [Cd7]-metallothionein-1 by homonuclear and heteronuclear NMR spectroscopy.</title>
        <authorList>
            <person name="Zangger K."/>
            <person name="Oez G."/>
            <person name="Otvos J.D."/>
            <person name="Armitage I.M."/>
        </authorList>
    </citation>
    <scope>STRUCTURE BY NMR IN COMPLEX WITH CADMIUM IONS</scope>
</reference>
<sequence>MDPNCSCSTGGSCTCTSSCACKNCKCTSCKKSCCSCCPVGCSKCAQGCVCKGAADKCTCCA</sequence>
<proteinExistence type="evidence at protein level"/>
<protein>
    <recommendedName>
        <fullName>Metallothionein-1</fullName>
        <shortName>MT-1</shortName>
    </recommendedName>
    <alternativeName>
        <fullName>Metallothionein-I</fullName>
        <shortName>MT-I</shortName>
    </alternativeName>
</protein>
<name>MT1_MOUSE</name>
<keyword id="KW-0002">3D-structure</keyword>
<keyword id="KW-0007">Acetylation</keyword>
<keyword id="KW-0903">Direct protein sequencing</keyword>
<keyword id="KW-0479">Metal-binding</keyword>
<keyword id="KW-0480">Metal-thiolate cluster</keyword>
<keyword id="KW-1185">Reference proteome</keyword>
<feature type="chain" id="PRO_0000197206" description="Metallothionein-1">
    <location>
        <begin position="1"/>
        <end position="61"/>
    </location>
</feature>
<feature type="region of interest" description="Beta">
    <location>
        <begin position="1"/>
        <end position="29"/>
    </location>
</feature>
<feature type="region of interest" description="Alpha">
    <location>
        <begin position="30"/>
        <end position="61"/>
    </location>
</feature>
<feature type="binding site" evidence="1 5">
    <location>
        <position position="5"/>
    </location>
    <ligand>
        <name>a divalent metal cation</name>
        <dbReference type="ChEBI" id="CHEBI:60240"/>
        <label>1</label>
        <note>in cluster B</note>
    </ligand>
</feature>
<feature type="binding site" evidence="1 5">
    <location>
        <position position="7"/>
    </location>
    <ligand>
        <name>a divalent metal cation</name>
        <dbReference type="ChEBI" id="CHEBI:60240"/>
        <label>1</label>
        <note>in cluster B</note>
    </ligand>
</feature>
<feature type="binding site" evidence="1 5">
    <location>
        <position position="7"/>
    </location>
    <ligand>
        <name>a divalent metal cation</name>
        <dbReference type="ChEBI" id="CHEBI:60240"/>
        <label>2</label>
        <note>in cluster B</note>
    </ligand>
</feature>
<feature type="binding site" evidence="1 5">
    <location>
        <position position="13"/>
    </location>
    <ligand>
        <name>a divalent metal cation</name>
        <dbReference type="ChEBI" id="CHEBI:60240"/>
        <label>2</label>
        <note>in cluster B</note>
    </ligand>
</feature>
<feature type="binding site" evidence="1 5">
    <location>
        <position position="15"/>
    </location>
    <ligand>
        <name>a divalent metal cation</name>
        <dbReference type="ChEBI" id="CHEBI:60240"/>
        <label>2</label>
        <note>in cluster B</note>
    </ligand>
</feature>
<feature type="binding site" evidence="1 5">
    <location>
        <position position="15"/>
    </location>
    <ligand>
        <name>a divalent metal cation</name>
        <dbReference type="ChEBI" id="CHEBI:60240"/>
        <label>3</label>
        <note>in cluster B</note>
    </ligand>
</feature>
<feature type="binding site" evidence="1 5">
    <location>
        <position position="19"/>
    </location>
    <ligand>
        <name>a divalent metal cation</name>
        <dbReference type="ChEBI" id="CHEBI:60240"/>
        <label>3</label>
        <note>in cluster B</note>
    </ligand>
</feature>
<feature type="binding site" evidence="1 5">
    <location>
        <position position="21"/>
    </location>
    <ligand>
        <name>a divalent metal cation</name>
        <dbReference type="ChEBI" id="CHEBI:60240"/>
        <label>1</label>
        <note>in cluster B</note>
    </ligand>
</feature>
<feature type="binding site" evidence="1 5">
    <location>
        <position position="24"/>
    </location>
    <ligand>
        <name>a divalent metal cation</name>
        <dbReference type="ChEBI" id="CHEBI:60240"/>
        <label>1</label>
        <note>in cluster B</note>
    </ligand>
</feature>
<feature type="binding site" evidence="1 5">
    <location>
        <position position="24"/>
    </location>
    <ligand>
        <name>a divalent metal cation</name>
        <dbReference type="ChEBI" id="CHEBI:60240"/>
        <label>3</label>
        <note>in cluster B</note>
    </ligand>
</feature>
<feature type="binding site" evidence="1 5">
    <location>
        <position position="26"/>
    </location>
    <ligand>
        <name>a divalent metal cation</name>
        <dbReference type="ChEBI" id="CHEBI:60240"/>
        <label>2</label>
        <note>in cluster B</note>
    </ligand>
</feature>
<feature type="binding site" evidence="1 5">
    <location>
        <position position="29"/>
    </location>
    <ligand>
        <name>a divalent metal cation</name>
        <dbReference type="ChEBI" id="CHEBI:60240"/>
        <label>3</label>
        <note>in cluster B</note>
    </ligand>
</feature>
<feature type="binding site" evidence="1 4">
    <location>
        <position position="33"/>
    </location>
    <ligand>
        <name>a divalent metal cation</name>
        <dbReference type="ChEBI" id="CHEBI:60240"/>
        <label>4</label>
        <note>in cluster A</note>
    </ligand>
</feature>
<feature type="binding site" evidence="1 4">
    <location>
        <position position="34"/>
    </location>
    <ligand>
        <name>a divalent metal cation</name>
        <dbReference type="ChEBI" id="CHEBI:60240"/>
        <label>4</label>
        <note>in cluster A</note>
    </ligand>
</feature>
<feature type="binding site" evidence="1 4">
    <location>
        <position position="34"/>
    </location>
    <ligand>
        <name>a divalent metal cation</name>
        <dbReference type="ChEBI" id="CHEBI:60240"/>
        <label>5</label>
        <note>in cluster A</note>
    </ligand>
</feature>
<feature type="binding site" evidence="1 4">
    <location>
        <position position="36"/>
    </location>
    <ligand>
        <name>a divalent metal cation</name>
        <dbReference type="ChEBI" id="CHEBI:60240"/>
        <label>5</label>
        <note>in cluster A</note>
    </ligand>
</feature>
<feature type="binding site" evidence="1 4">
    <location>
        <position position="37"/>
    </location>
    <ligand>
        <name>a divalent metal cation</name>
        <dbReference type="ChEBI" id="CHEBI:60240"/>
        <label>5</label>
        <note>in cluster A</note>
    </ligand>
</feature>
<feature type="binding site" evidence="1 4">
    <location>
        <position position="37"/>
    </location>
    <ligand>
        <name>a divalent metal cation</name>
        <dbReference type="ChEBI" id="CHEBI:60240"/>
        <label>6</label>
        <note>in cluster A</note>
    </ligand>
</feature>
<feature type="binding site" evidence="1 4">
    <location>
        <position position="41"/>
    </location>
    <ligand>
        <name>a divalent metal cation</name>
        <dbReference type="ChEBI" id="CHEBI:60240"/>
        <label>6</label>
        <note>in cluster A</note>
    </ligand>
</feature>
<feature type="binding site" evidence="1 4">
    <location>
        <position position="44"/>
    </location>
    <ligand>
        <name>a divalent metal cation</name>
        <dbReference type="ChEBI" id="CHEBI:60240"/>
        <label>4</label>
        <note>in cluster A</note>
    </ligand>
</feature>
<feature type="binding site" evidence="1 4">
    <location>
        <position position="44"/>
    </location>
    <ligand>
        <name>a divalent metal cation</name>
        <dbReference type="ChEBI" id="CHEBI:60240"/>
        <label>6</label>
        <note>in cluster A</note>
    </ligand>
</feature>
<feature type="binding site" evidence="1 4">
    <location>
        <position position="48"/>
    </location>
    <ligand>
        <name>a divalent metal cation</name>
        <dbReference type="ChEBI" id="CHEBI:60240"/>
        <label>4</label>
        <note>in cluster A</note>
    </ligand>
</feature>
<feature type="binding site" evidence="1 4">
    <location>
        <position position="50"/>
    </location>
    <ligand>
        <name>a divalent metal cation</name>
        <dbReference type="ChEBI" id="CHEBI:60240"/>
        <label>5</label>
        <note>in cluster A</note>
    </ligand>
</feature>
<feature type="binding site" evidence="1 4">
    <location>
        <position position="50"/>
    </location>
    <ligand>
        <name>a divalent metal cation</name>
        <dbReference type="ChEBI" id="CHEBI:60240"/>
        <label>7</label>
        <note>in cluster A</note>
    </ligand>
</feature>
<feature type="binding site" evidence="1 4">
    <location>
        <position position="57"/>
    </location>
    <ligand>
        <name>a divalent metal cation</name>
        <dbReference type="ChEBI" id="CHEBI:60240"/>
        <label>7</label>
        <note>in cluster A</note>
    </ligand>
</feature>
<feature type="binding site" evidence="1 4">
    <location>
        <position position="59"/>
    </location>
    <ligand>
        <name>a divalent metal cation</name>
        <dbReference type="ChEBI" id="CHEBI:60240"/>
        <label>7</label>
        <note>in cluster A</note>
    </ligand>
</feature>
<feature type="binding site" evidence="1 4">
    <location>
        <position position="60"/>
    </location>
    <ligand>
        <name>a divalent metal cation</name>
        <dbReference type="ChEBI" id="CHEBI:60240"/>
        <label>6</label>
        <note>in cluster A</note>
    </ligand>
</feature>
<feature type="binding site" evidence="1 4">
    <location>
        <position position="60"/>
    </location>
    <ligand>
        <name>a divalent metal cation</name>
        <dbReference type="ChEBI" id="CHEBI:60240"/>
        <label>7</label>
        <note>in cluster A</note>
    </ligand>
</feature>
<feature type="modified residue" description="N-acetylmethionine" evidence="2">
    <location>
        <position position="1"/>
    </location>
</feature>
<feature type="sequence conflict" description="In Ref. 1; AA sequence." evidence="3" ref="1">
    <original>N</original>
    <variation>D</variation>
    <location>
        <position position="23"/>
    </location>
</feature>
<feature type="sequence conflict" description="In Ref. 4." evidence="3" ref="4">
    <original>S</original>
    <variation>G</variation>
    <location>
        <position position="32"/>
    </location>
</feature>
<feature type="strand" evidence="7">
    <location>
        <begin position="9"/>
        <end position="11"/>
    </location>
</feature>
<feature type="strand" evidence="7">
    <location>
        <begin position="20"/>
        <end position="23"/>
    </location>
</feature>
<feature type="strand" evidence="7">
    <location>
        <begin position="25"/>
        <end position="28"/>
    </location>
</feature>
<feature type="strand" evidence="6">
    <location>
        <begin position="35"/>
        <end position="37"/>
    </location>
</feature>
<feature type="strand" evidence="6">
    <location>
        <begin position="42"/>
        <end position="47"/>
    </location>
</feature>
<organism>
    <name type="scientific">Mus musculus</name>
    <name type="common">Mouse</name>
    <dbReference type="NCBI Taxonomy" id="10090"/>
    <lineage>
        <taxon>Eukaryota</taxon>
        <taxon>Metazoa</taxon>
        <taxon>Chordata</taxon>
        <taxon>Craniata</taxon>
        <taxon>Vertebrata</taxon>
        <taxon>Euteleostomi</taxon>
        <taxon>Mammalia</taxon>
        <taxon>Eutheria</taxon>
        <taxon>Euarchontoglires</taxon>
        <taxon>Glires</taxon>
        <taxon>Rodentia</taxon>
        <taxon>Myomorpha</taxon>
        <taxon>Muroidea</taxon>
        <taxon>Muridae</taxon>
        <taxon>Murinae</taxon>
        <taxon>Mus</taxon>
        <taxon>Mus</taxon>
    </lineage>
</organism>
<evidence type="ECO:0000269" key="1">
    <source>
    </source>
</evidence>
<evidence type="ECO:0000269" key="2">
    <source>
    </source>
</evidence>
<evidence type="ECO:0000305" key="3"/>
<evidence type="ECO:0007744" key="4">
    <source>
        <dbReference type="PDB" id="1DFS"/>
    </source>
</evidence>
<evidence type="ECO:0007744" key="5">
    <source>
        <dbReference type="PDB" id="1DFT"/>
    </source>
</evidence>
<evidence type="ECO:0007829" key="6">
    <source>
        <dbReference type="PDB" id="1DFS"/>
    </source>
</evidence>
<evidence type="ECO:0007829" key="7">
    <source>
        <dbReference type="PDB" id="1DFT"/>
    </source>
</evidence>
<gene>
    <name type="primary">Mt1</name>
</gene>
<accession>P02802</accession>
<accession>Q64485</accession>
<dbReference type="EMBL" id="S62785">
    <property type="protein sequence ID" value="AAB26768.1"/>
    <property type="molecule type" value="mRNA"/>
</dbReference>
<dbReference type="EMBL" id="J00605">
    <property type="protein sequence ID" value="AAA39527.2"/>
    <property type="molecule type" value="Genomic_DNA"/>
</dbReference>
<dbReference type="EMBL" id="AK018727">
    <property type="protein sequence ID" value="BAC25563.1"/>
    <property type="molecule type" value="mRNA"/>
</dbReference>
<dbReference type="EMBL" id="BC036990">
    <property type="protein sequence ID" value="AAH36990.1"/>
    <property type="molecule type" value="mRNA"/>
</dbReference>
<dbReference type="CCDS" id="CCDS40438.1"/>
<dbReference type="PIR" id="A93261">
    <property type="entry name" value="SMMSI"/>
</dbReference>
<dbReference type="RefSeq" id="NP_038630.1">
    <property type="nucleotide sequence ID" value="NM_013602.3"/>
</dbReference>
<dbReference type="PDB" id="1DFS">
    <property type="method" value="NMR"/>
    <property type="chains" value="A=31-61"/>
</dbReference>
<dbReference type="PDB" id="1DFT">
    <property type="method" value="NMR"/>
    <property type="chains" value="A=1-30"/>
</dbReference>
<dbReference type="PDBsum" id="1DFS"/>
<dbReference type="PDBsum" id="1DFT"/>
<dbReference type="BMRB" id="P02802"/>
<dbReference type="SMR" id="P02802"/>
<dbReference type="BioGRID" id="201578">
    <property type="interactions" value="2"/>
</dbReference>
<dbReference type="FunCoup" id="P02802">
    <property type="interactions" value="142"/>
</dbReference>
<dbReference type="STRING" id="10090.ENSMUSP00000034215"/>
<dbReference type="iPTMnet" id="P02802"/>
<dbReference type="PhosphoSitePlus" id="P02802"/>
<dbReference type="SwissPalm" id="P02802"/>
<dbReference type="jPOST" id="P02802"/>
<dbReference type="PaxDb" id="10090-ENSMUSP00000034215"/>
<dbReference type="PeptideAtlas" id="P02802"/>
<dbReference type="ProteomicsDB" id="290103"/>
<dbReference type="TopDownProteomics" id="P02802"/>
<dbReference type="Ensembl" id="ENSMUST00000034215.8">
    <property type="protein sequence ID" value="ENSMUSP00000034215.7"/>
    <property type="gene ID" value="ENSMUSG00000031765.9"/>
</dbReference>
<dbReference type="GeneID" id="17748"/>
<dbReference type="KEGG" id="mmu:17748"/>
<dbReference type="UCSC" id="uc009mvw.2">
    <property type="organism name" value="mouse"/>
</dbReference>
<dbReference type="AGR" id="MGI:97171"/>
<dbReference type="CTD" id="17748"/>
<dbReference type="MGI" id="MGI:97171">
    <property type="gene designation" value="Mt1"/>
</dbReference>
<dbReference type="VEuPathDB" id="HostDB:ENSMUSG00000031765"/>
<dbReference type="eggNOG" id="KOG4738">
    <property type="taxonomic scope" value="Eukaryota"/>
</dbReference>
<dbReference type="GeneTree" id="ENSGT00950000182967"/>
<dbReference type="HOGENOM" id="CLU_171204_2_0_1"/>
<dbReference type="InParanoid" id="P02802"/>
<dbReference type="OrthoDB" id="9635099at2759"/>
<dbReference type="TreeFam" id="TF336054"/>
<dbReference type="BioGRID-ORCS" id="17748">
    <property type="hits" value="4 hits in 77 CRISPR screens"/>
</dbReference>
<dbReference type="ChiTaRS" id="Mt1">
    <property type="organism name" value="mouse"/>
</dbReference>
<dbReference type="EvolutionaryTrace" id="P02802"/>
<dbReference type="PRO" id="PR:P02802"/>
<dbReference type="Proteomes" id="UP000000589">
    <property type="component" value="Chromosome 8"/>
</dbReference>
<dbReference type="RNAct" id="P02802">
    <property type="molecule type" value="protein"/>
</dbReference>
<dbReference type="Bgee" id="ENSMUSG00000031765">
    <property type="expression patterns" value="Expressed in gastrula and 296 other cell types or tissues"/>
</dbReference>
<dbReference type="ExpressionAtlas" id="P02802">
    <property type="expression patterns" value="baseline and differential"/>
</dbReference>
<dbReference type="GO" id="GO:0005737">
    <property type="term" value="C:cytoplasm"/>
    <property type="evidence" value="ECO:0000250"/>
    <property type="project" value="UniProtKB"/>
</dbReference>
<dbReference type="GO" id="GO:0005829">
    <property type="term" value="C:cytosol"/>
    <property type="evidence" value="ECO:0000314"/>
    <property type="project" value="MGI"/>
</dbReference>
<dbReference type="GO" id="GO:0005764">
    <property type="term" value="C:lysosome"/>
    <property type="evidence" value="ECO:0000314"/>
    <property type="project" value="MGI"/>
</dbReference>
<dbReference type="GO" id="GO:0005634">
    <property type="term" value="C:nucleus"/>
    <property type="evidence" value="ECO:0000250"/>
    <property type="project" value="UniProtKB"/>
</dbReference>
<dbReference type="GO" id="GO:0005507">
    <property type="term" value="F:copper ion binding"/>
    <property type="evidence" value="ECO:0000314"/>
    <property type="project" value="MGI"/>
</dbReference>
<dbReference type="GO" id="GO:0046872">
    <property type="term" value="F:metal ion binding"/>
    <property type="evidence" value="ECO:0000314"/>
    <property type="project" value="MGI"/>
</dbReference>
<dbReference type="GO" id="GO:0008270">
    <property type="term" value="F:zinc ion binding"/>
    <property type="evidence" value="ECO:0000250"/>
    <property type="project" value="UniProtKB"/>
</dbReference>
<dbReference type="GO" id="GO:0071247">
    <property type="term" value="P:cellular response to chromate"/>
    <property type="evidence" value="ECO:0000314"/>
    <property type="project" value="MGI"/>
</dbReference>
<dbReference type="GO" id="GO:0071294">
    <property type="term" value="P:cellular response to zinc ion"/>
    <property type="evidence" value="ECO:0000314"/>
    <property type="project" value="MGI"/>
</dbReference>
<dbReference type="GO" id="GO:0010273">
    <property type="term" value="P:detoxification of copper ion"/>
    <property type="evidence" value="ECO:0000316"/>
    <property type="project" value="MGI"/>
</dbReference>
<dbReference type="GO" id="GO:0030003">
    <property type="term" value="P:intracellular monoatomic cation homeostasis"/>
    <property type="evidence" value="ECO:0000314"/>
    <property type="project" value="MGI"/>
</dbReference>
<dbReference type="GO" id="GO:0006882">
    <property type="term" value="P:intracellular zinc ion homeostasis"/>
    <property type="evidence" value="ECO:0000315"/>
    <property type="project" value="MGI"/>
</dbReference>
<dbReference type="GO" id="GO:0045926">
    <property type="term" value="P:negative regulation of growth"/>
    <property type="evidence" value="ECO:0000250"/>
    <property type="project" value="UniProtKB"/>
</dbReference>
<dbReference type="GO" id="GO:0043524">
    <property type="term" value="P:negative regulation of neuron apoptotic process"/>
    <property type="evidence" value="ECO:0000314"/>
    <property type="project" value="UniProtKB"/>
</dbReference>
<dbReference type="GO" id="GO:0007263">
    <property type="term" value="P:nitric oxide mediated signal transduction"/>
    <property type="evidence" value="ECO:0000315"/>
    <property type="project" value="MGI"/>
</dbReference>
<dbReference type="FunFam" id="4.10.10.10:FF:000001">
    <property type="entry name" value="Metallothionein"/>
    <property type="match status" value="1"/>
</dbReference>
<dbReference type="Gene3D" id="4.10.10.10">
    <property type="entry name" value="Metallothionein Isoform II"/>
    <property type="match status" value="1"/>
</dbReference>
<dbReference type="InterPro" id="IPR017854">
    <property type="entry name" value="Metalthion_dom_sf"/>
</dbReference>
<dbReference type="InterPro" id="IPR023587">
    <property type="entry name" value="Metalthion_dom_sf_vert"/>
</dbReference>
<dbReference type="InterPro" id="IPR000006">
    <property type="entry name" value="Metalthion_vert"/>
</dbReference>
<dbReference type="InterPro" id="IPR018064">
    <property type="entry name" value="Metalthion_vert_metal_BS"/>
</dbReference>
<dbReference type="PANTHER" id="PTHR23299">
    <property type="entry name" value="METALLOTHIONEIN"/>
    <property type="match status" value="1"/>
</dbReference>
<dbReference type="PANTHER" id="PTHR23299:SF55">
    <property type="entry name" value="METALLOTHIONEIN-1F"/>
    <property type="match status" value="1"/>
</dbReference>
<dbReference type="Pfam" id="PF00131">
    <property type="entry name" value="Metallothio"/>
    <property type="match status" value="1"/>
</dbReference>
<dbReference type="PRINTS" id="PR00860">
    <property type="entry name" value="MTVERTEBRATE"/>
</dbReference>
<dbReference type="SUPFAM" id="SSF57868">
    <property type="entry name" value="Metallothionein"/>
    <property type="match status" value="1"/>
</dbReference>
<dbReference type="PROSITE" id="PS00203">
    <property type="entry name" value="METALLOTHIONEIN_VRT"/>
    <property type="match status" value="1"/>
</dbReference>